<reference key="1">
    <citation type="journal article" date="2011" name="J. Bacteriol.">
        <title>Comparative genomics of 28 Salmonella enterica isolates: evidence for CRISPR-mediated adaptive sublineage evolution.</title>
        <authorList>
            <person name="Fricke W.F."/>
            <person name="Mammel M.K."/>
            <person name="McDermott P.F."/>
            <person name="Tartera C."/>
            <person name="White D.G."/>
            <person name="Leclerc J.E."/>
            <person name="Ravel J."/>
            <person name="Cebula T.A."/>
        </authorList>
    </citation>
    <scope>NUCLEOTIDE SEQUENCE [LARGE SCALE GENOMIC DNA]</scope>
    <source>
        <strain>SL254</strain>
    </source>
</reference>
<sequence length="130" mass="14127">MSMQDPIADMLTRIRNGQAANKAAVTMPSSKLKVAIANVLKEEGFIEDFKVEGDTKPELELTLKYFQGKAVVESIQRVSRPGLRIYKRKDELPKVMAGLGIAVVSTSKGVMTDRAARQAGLGGEIICYVA</sequence>
<keyword id="KW-0687">Ribonucleoprotein</keyword>
<keyword id="KW-0689">Ribosomal protein</keyword>
<keyword id="KW-0694">RNA-binding</keyword>
<keyword id="KW-0699">rRNA-binding</keyword>
<accession>B4SUS6</accession>
<feature type="chain" id="PRO_1000140609" description="Small ribosomal subunit protein uS8">
    <location>
        <begin position="1"/>
        <end position="130"/>
    </location>
</feature>
<proteinExistence type="inferred from homology"/>
<gene>
    <name evidence="1" type="primary">rpsH</name>
    <name type="ordered locus">SNSL254_A3695</name>
</gene>
<organism>
    <name type="scientific">Salmonella newport (strain SL254)</name>
    <dbReference type="NCBI Taxonomy" id="423368"/>
    <lineage>
        <taxon>Bacteria</taxon>
        <taxon>Pseudomonadati</taxon>
        <taxon>Pseudomonadota</taxon>
        <taxon>Gammaproteobacteria</taxon>
        <taxon>Enterobacterales</taxon>
        <taxon>Enterobacteriaceae</taxon>
        <taxon>Salmonella</taxon>
    </lineage>
</organism>
<dbReference type="EMBL" id="CP001113">
    <property type="protein sequence ID" value="ACF61855.1"/>
    <property type="molecule type" value="Genomic_DNA"/>
</dbReference>
<dbReference type="RefSeq" id="WP_000062611.1">
    <property type="nucleotide sequence ID" value="NZ_CCMR01000003.1"/>
</dbReference>
<dbReference type="SMR" id="B4SUS6"/>
<dbReference type="GeneID" id="93778681"/>
<dbReference type="KEGG" id="see:SNSL254_A3695"/>
<dbReference type="HOGENOM" id="CLU_098428_0_0_6"/>
<dbReference type="Proteomes" id="UP000008824">
    <property type="component" value="Chromosome"/>
</dbReference>
<dbReference type="GO" id="GO:1990904">
    <property type="term" value="C:ribonucleoprotein complex"/>
    <property type="evidence" value="ECO:0007669"/>
    <property type="project" value="UniProtKB-KW"/>
</dbReference>
<dbReference type="GO" id="GO:0005840">
    <property type="term" value="C:ribosome"/>
    <property type="evidence" value="ECO:0007669"/>
    <property type="project" value="UniProtKB-KW"/>
</dbReference>
<dbReference type="GO" id="GO:0019843">
    <property type="term" value="F:rRNA binding"/>
    <property type="evidence" value="ECO:0007669"/>
    <property type="project" value="UniProtKB-UniRule"/>
</dbReference>
<dbReference type="GO" id="GO:0003735">
    <property type="term" value="F:structural constituent of ribosome"/>
    <property type="evidence" value="ECO:0007669"/>
    <property type="project" value="InterPro"/>
</dbReference>
<dbReference type="GO" id="GO:0006412">
    <property type="term" value="P:translation"/>
    <property type="evidence" value="ECO:0007669"/>
    <property type="project" value="UniProtKB-UniRule"/>
</dbReference>
<dbReference type="FunFam" id="3.30.1370.30:FF:000003">
    <property type="entry name" value="30S ribosomal protein S8"/>
    <property type="match status" value="1"/>
</dbReference>
<dbReference type="FunFam" id="3.30.1490.10:FF:000001">
    <property type="entry name" value="30S ribosomal protein S8"/>
    <property type="match status" value="1"/>
</dbReference>
<dbReference type="Gene3D" id="3.30.1370.30">
    <property type="match status" value="1"/>
</dbReference>
<dbReference type="Gene3D" id="3.30.1490.10">
    <property type="match status" value="1"/>
</dbReference>
<dbReference type="HAMAP" id="MF_01302_B">
    <property type="entry name" value="Ribosomal_uS8_B"/>
    <property type="match status" value="1"/>
</dbReference>
<dbReference type="InterPro" id="IPR000630">
    <property type="entry name" value="Ribosomal_uS8"/>
</dbReference>
<dbReference type="InterPro" id="IPR047863">
    <property type="entry name" value="Ribosomal_uS8_CS"/>
</dbReference>
<dbReference type="InterPro" id="IPR035987">
    <property type="entry name" value="Ribosomal_uS8_sf"/>
</dbReference>
<dbReference type="NCBIfam" id="NF001109">
    <property type="entry name" value="PRK00136.1"/>
    <property type="match status" value="1"/>
</dbReference>
<dbReference type="PANTHER" id="PTHR11758">
    <property type="entry name" value="40S RIBOSOMAL PROTEIN S15A"/>
    <property type="match status" value="1"/>
</dbReference>
<dbReference type="Pfam" id="PF00410">
    <property type="entry name" value="Ribosomal_S8"/>
    <property type="match status" value="1"/>
</dbReference>
<dbReference type="SUPFAM" id="SSF56047">
    <property type="entry name" value="Ribosomal protein S8"/>
    <property type="match status" value="1"/>
</dbReference>
<dbReference type="PROSITE" id="PS00053">
    <property type="entry name" value="RIBOSOMAL_S8"/>
    <property type="match status" value="1"/>
</dbReference>
<protein>
    <recommendedName>
        <fullName evidence="1">Small ribosomal subunit protein uS8</fullName>
    </recommendedName>
    <alternativeName>
        <fullName evidence="2">30S ribosomal protein S8</fullName>
    </alternativeName>
</protein>
<comment type="function">
    <text evidence="1">One of the primary rRNA binding proteins, it binds directly to 16S rRNA central domain where it helps coordinate assembly of the platform of the 30S subunit.</text>
</comment>
<comment type="subunit">
    <text evidence="1">Part of the 30S ribosomal subunit. Contacts proteins S5 and S12.</text>
</comment>
<comment type="similarity">
    <text evidence="1">Belongs to the universal ribosomal protein uS8 family.</text>
</comment>
<name>RS8_SALNS</name>
<evidence type="ECO:0000255" key="1">
    <source>
        <dbReference type="HAMAP-Rule" id="MF_01302"/>
    </source>
</evidence>
<evidence type="ECO:0000305" key="2"/>